<proteinExistence type="inferred from homology"/>
<dbReference type="EC" id="2.8.1.10" evidence="1"/>
<dbReference type="EMBL" id="AE005174">
    <property type="protein sequence ID" value="AAG59187.1"/>
    <property type="status" value="ALT_INIT"/>
    <property type="molecule type" value="Genomic_DNA"/>
</dbReference>
<dbReference type="EMBL" id="BA000007">
    <property type="protein sequence ID" value="BAB38337.1"/>
    <property type="status" value="ALT_INIT"/>
    <property type="molecule type" value="Genomic_DNA"/>
</dbReference>
<dbReference type="PIR" id="B91243">
    <property type="entry name" value="B91243"/>
</dbReference>
<dbReference type="PIR" id="G86090">
    <property type="entry name" value="G86090"/>
</dbReference>
<dbReference type="RefSeq" id="NP_312941.2">
    <property type="nucleotide sequence ID" value="NC_002695.1"/>
</dbReference>
<dbReference type="RefSeq" id="WP_000944101.1">
    <property type="nucleotide sequence ID" value="NZ_VOAI01000037.1"/>
</dbReference>
<dbReference type="SMR" id="P58263"/>
<dbReference type="STRING" id="155864.Z5565"/>
<dbReference type="GeneID" id="914945"/>
<dbReference type="KEGG" id="ece:Z5565"/>
<dbReference type="KEGG" id="ecs:ECs_4914"/>
<dbReference type="PATRIC" id="fig|386585.9.peg.5138"/>
<dbReference type="eggNOG" id="COG2022">
    <property type="taxonomic scope" value="Bacteria"/>
</dbReference>
<dbReference type="HOGENOM" id="CLU_062233_1_0_6"/>
<dbReference type="OMA" id="PHNFQLI"/>
<dbReference type="UniPathway" id="UPA00060"/>
<dbReference type="Proteomes" id="UP000000558">
    <property type="component" value="Chromosome"/>
</dbReference>
<dbReference type="Proteomes" id="UP000002519">
    <property type="component" value="Chromosome"/>
</dbReference>
<dbReference type="GO" id="GO:0005737">
    <property type="term" value="C:cytoplasm"/>
    <property type="evidence" value="ECO:0007669"/>
    <property type="project" value="UniProtKB-SubCell"/>
</dbReference>
<dbReference type="GO" id="GO:1990107">
    <property type="term" value="F:thiazole synthase activity"/>
    <property type="evidence" value="ECO:0007669"/>
    <property type="project" value="UniProtKB-EC"/>
</dbReference>
<dbReference type="GO" id="GO:0009229">
    <property type="term" value="P:thiamine diphosphate biosynthetic process"/>
    <property type="evidence" value="ECO:0007669"/>
    <property type="project" value="UniProtKB-UniRule"/>
</dbReference>
<dbReference type="CDD" id="cd04728">
    <property type="entry name" value="ThiG"/>
    <property type="match status" value="1"/>
</dbReference>
<dbReference type="FunFam" id="3.20.20.70:FF:000049">
    <property type="entry name" value="Thiazole synthase"/>
    <property type="match status" value="1"/>
</dbReference>
<dbReference type="Gene3D" id="3.20.20.70">
    <property type="entry name" value="Aldolase class I"/>
    <property type="match status" value="1"/>
</dbReference>
<dbReference type="HAMAP" id="MF_00443">
    <property type="entry name" value="ThiG"/>
    <property type="match status" value="1"/>
</dbReference>
<dbReference type="InterPro" id="IPR013785">
    <property type="entry name" value="Aldolase_TIM"/>
</dbReference>
<dbReference type="InterPro" id="IPR033983">
    <property type="entry name" value="Thiazole_synthase_ThiG"/>
</dbReference>
<dbReference type="InterPro" id="IPR008867">
    <property type="entry name" value="ThiG"/>
</dbReference>
<dbReference type="PANTHER" id="PTHR34266">
    <property type="entry name" value="THIAZOLE SYNTHASE"/>
    <property type="match status" value="1"/>
</dbReference>
<dbReference type="PANTHER" id="PTHR34266:SF2">
    <property type="entry name" value="THIAZOLE SYNTHASE"/>
    <property type="match status" value="1"/>
</dbReference>
<dbReference type="Pfam" id="PF05690">
    <property type="entry name" value="ThiG"/>
    <property type="match status" value="1"/>
</dbReference>
<dbReference type="SUPFAM" id="SSF110399">
    <property type="entry name" value="ThiG-like"/>
    <property type="match status" value="1"/>
</dbReference>
<sequence>MLRIADKTFDSHLFTGTGKFASSQLMVEAIRASGSQLVTLAMKRVDLRQHNDAILEPLIAAGVTLLPNTSGAKTAEEAIFAAHLAREALGTNWLKLEIHPDARWLLPDPIETLKAAETLVQQGFVVLPYCGADPVLCKRLEEVGCAAVMPLGAPIGSNQGLETRAMLEIIIQQATVPVVVDAGIGVPSHAAQALEMGADAVLVNTAIAVADDPVNMAKAFRLAVEAGLLAPQSGPGSRSYFAHATSPLTGFLEASV</sequence>
<organism>
    <name type="scientific">Escherichia coli O157:H7</name>
    <dbReference type="NCBI Taxonomy" id="83334"/>
    <lineage>
        <taxon>Bacteria</taxon>
        <taxon>Pseudomonadati</taxon>
        <taxon>Pseudomonadota</taxon>
        <taxon>Gammaproteobacteria</taxon>
        <taxon>Enterobacterales</taxon>
        <taxon>Enterobacteriaceae</taxon>
        <taxon>Escherichia</taxon>
    </lineage>
</organism>
<comment type="function">
    <text evidence="1">Catalyzes the rearrangement of 1-deoxy-D-xylulose 5-phosphate (DXP) to produce the thiazole phosphate moiety of thiamine. Sulfur is provided by the thiocarboxylate moiety of the carrier protein ThiS. In vitro, sulfur can be provided by H(2)S.</text>
</comment>
<comment type="catalytic activity">
    <reaction evidence="1">
        <text>[ThiS sulfur-carrier protein]-C-terminal-Gly-aminoethanethioate + 2-iminoacetate + 1-deoxy-D-xylulose 5-phosphate = [ThiS sulfur-carrier protein]-C-terminal Gly-Gly + 2-[(2R,5Z)-2-carboxy-4-methylthiazol-5(2H)-ylidene]ethyl phosphate + 2 H2O + H(+)</text>
        <dbReference type="Rhea" id="RHEA:26297"/>
        <dbReference type="Rhea" id="RHEA-COMP:12909"/>
        <dbReference type="Rhea" id="RHEA-COMP:19908"/>
        <dbReference type="ChEBI" id="CHEBI:15377"/>
        <dbReference type="ChEBI" id="CHEBI:15378"/>
        <dbReference type="ChEBI" id="CHEBI:57792"/>
        <dbReference type="ChEBI" id="CHEBI:62899"/>
        <dbReference type="ChEBI" id="CHEBI:77846"/>
        <dbReference type="ChEBI" id="CHEBI:90778"/>
        <dbReference type="ChEBI" id="CHEBI:232372"/>
        <dbReference type="EC" id="2.8.1.10"/>
    </reaction>
</comment>
<comment type="pathway">
    <text evidence="1">Cofactor biosynthesis; thiamine diphosphate biosynthesis.</text>
</comment>
<comment type="subunit">
    <text evidence="1">Homotetramer. Forms heterodimers with either ThiH or ThiS.</text>
</comment>
<comment type="subcellular location">
    <subcellularLocation>
        <location evidence="1">Cytoplasm</location>
    </subcellularLocation>
</comment>
<comment type="similarity">
    <text evidence="1">Belongs to the ThiG family.</text>
</comment>
<comment type="sequence caution" evidence="2">
    <conflict type="erroneous initiation">
        <sequence resource="EMBL-CDS" id="AAG59187"/>
    </conflict>
</comment>
<comment type="sequence caution" evidence="2">
    <conflict type="erroneous initiation">
        <sequence resource="EMBL-CDS" id="BAB38337"/>
    </conflict>
</comment>
<accession>P58263</accession>
<gene>
    <name evidence="1" type="primary">thiG</name>
    <name type="ordered locus">Z5565</name>
    <name type="ordered locus">ECs4914</name>
</gene>
<reference key="1">
    <citation type="journal article" date="2001" name="Nature">
        <title>Genome sequence of enterohaemorrhagic Escherichia coli O157:H7.</title>
        <authorList>
            <person name="Perna N.T."/>
            <person name="Plunkett G. III"/>
            <person name="Burland V."/>
            <person name="Mau B."/>
            <person name="Glasner J.D."/>
            <person name="Rose D.J."/>
            <person name="Mayhew G.F."/>
            <person name="Evans P.S."/>
            <person name="Gregor J."/>
            <person name="Kirkpatrick H.A."/>
            <person name="Posfai G."/>
            <person name="Hackett J."/>
            <person name="Klink S."/>
            <person name="Boutin A."/>
            <person name="Shao Y."/>
            <person name="Miller L."/>
            <person name="Grotbeck E.J."/>
            <person name="Davis N.W."/>
            <person name="Lim A."/>
            <person name="Dimalanta E.T."/>
            <person name="Potamousis K."/>
            <person name="Apodaca J."/>
            <person name="Anantharaman T.S."/>
            <person name="Lin J."/>
            <person name="Yen G."/>
            <person name="Schwartz D.C."/>
            <person name="Welch R.A."/>
            <person name="Blattner F.R."/>
        </authorList>
    </citation>
    <scope>NUCLEOTIDE SEQUENCE [LARGE SCALE GENOMIC DNA]</scope>
    <source>
        <strain>O157:H7 / EDL933 / ATCC 700927 / EHEC</strain>
    </source>
</reference>
<reference key="2">
    <citation type="journal article" date="2001" name="DNA Res.">
        <title>Complete genome sequence of enterohemorrhagic Escherichia coli O157:H7 and genomic comparison with a laboratory strain K-12.</title>
        <authorList>
            <person name="Hayashi T."/>
            <person name="Makino K."/>
            <person name="Ohnishi M."/>
            <person name="Kurokawa K."/>
            <person name="Ishii K."/>
            <person name="Yokoyama K."/>
            <person name="Han C.-G."/>
            <person name="Ohtsubo E."/>
            <person name="Nakayama K."/>
            <person name="Murata T."/>
            <person name="Tanaka M."/>
            <person name="Tobe T."/>
            <person name="Iida T."/>
            <person name="Takami H."/>
            <person name="Honda T."/>
            <person name="Sasakawa C."/>
            <person name="Ogasawara N."/>
            <person name="Yasunaga T."/>
            <person name="Kuhara S."/>
            <person name="Shiba T."/>
            <person name="Hattori M."/>
            <person name="Shinagawa H."/>
        </authorList>
    </citation>
    <scope>NUCLEOTIDE SEQUENCE [LARGE SCALE GENOMIC DNA]</scope>
    <source>
        <strain>O157:H7 / Sakai / RIMD 0509952 / EHEC</strain>
    </source>
</reference>
<protein>
    <recommendedName>
        <fullName evidence="1">Thiazole synthase</fullName>
        <ecNumber evidence="1">2.8.1.10</ecNumber>
    </recommendedName>
</protein>
<evidence type="ECO:0000255" key="1">
    <source>
        <dbReference type="HAMAP-Rule" id="MF_00443"/>
    </source>
</evidence>
<evidence type="ECO:0000305" key="2"/>
<feature type="chain" id="PRO_0000162817" description="Thiazole synthase">
    <location>
        <begin position="1"/>
        <end position="256"/>
    </location>
</feature>
<feature type="active site" description="Schiff-base intermediate with DXP" evidence="1">
    <location>
        <position position="95"/>
    </location>
</feature>
<feature type="binding site" evidence="1">
    <location>
        <position position="156"/>
    </location>
    <ligand>
        <name>1-deoxy-D-xylulose 5-phosphate</name>
        <dbReference type="ChEBI" id="CHEBI:57792"/>
    </ligand>
</feature>
<feature type="binding site" evidence="1">
    <location>
        <begin position="182"/>
        <end position="183"/>
    </location>
    <ligand>
        <name>1-deoxy-D-xylulose 5-phosphate</name>
        <dbReference type="ChEBI" id="CHEBI:57792"/>
    </ligand>
</feature>
<feature type="binding site" evidence="1">
    <location>
        <begin position="204"/>
        <end position="205"/>
    </location>
    <ligand>
        <name>1-deoxy-D-xylulose 5-phosphate</name>
        <dbReference type="ChEBI" id="CHEBI:57792"/>
    </ligand>
</feature>
<keyword id="KW-0963">Cytoplasm</keyword>
<keyword id="KW-1185">Reference proteome</keyword>
<keyword id="KW-0704">Schiff base</keyword>
<keyword id="KW-0784">Thiamine biosynthesis</keyword>
<keyword id="KW-0808">Transferase</keyword>
<name>THIG_ECO57</name>